<sequence>MLFYITVTVLLVSAQAKFYTDCGSKLATVQSVGVSGWPENARECVLKRNSNVTISIDFSPTTDVSAITTEVHGVIMSLPVPFPCRSPDACKDNGLTCPIKAGVVANYKTTLPVLKSYPKVSVDVKWELKKDEEDLVCILIPARIH</sequence>
<feature type="signal peptide" evidence="2">
    <location>
        <begin position="1"/>
        <end position="16"/>
    </location>
</feature>
<feature type="chain" id="PRO_0000019867" description="Ecdysteroid-regulated 16 kDa protein">
    <location>
        <begin position="17"/>
        <end position="145"/>
    </location>
</feature>
<feature type="glycosylation site" description="N-linked (GlcNAc...) asparagine" evidence="2">
    <location>
        <position position="51"/>
    </location>
</feature>
<feature type="disulfide bond" evidence="1">
    <location>
        <begin position="22"/>
        <end position="137"/>
    </location>
</feature>
<feature type="disulfide bond" evidence="1">
    <location>
        <begin position="90"/>
        <end position="97"/>
    </location>
</feature>
<comment type="subcellular location">
    <subcellularLocation>
        <location evidence="3">Secreted</location>
    </subcellularLocation>
</comment>
<comment type="similarity">
    <text evidence="3">Belongs to the NPC2 family.</text>
</comment>
<gene>
    <name type="primary">ESR16</name>
</gene>
<evidence type="ECO:0000250" key="1"/>
<evidence type="ECO:0000255" key="2"/>
<evidence type="ECO:0000305" key="3"/>
<dbReference type="EMBL" id="U31456">
    <property type="protein sequence ID" value="AAB08704.1"/>
    <property type="molecule type" value="mRNA"/>
</dbReference>
<dbReference type="SMR" id="Q25481"/>
<dbReference type="GlyCosmos" id="Q25481">
    <property type="glycosylation" value="1 site, No reported glycans"/>
</dbReference>
<dbReference type="OrthoDB" id="4937502at2759"/>
<dbReference type="GO" id="GO:0005576">
    <property type="term" value="C:extracellular region"/>
    <property type="evidence" value="ECO:0007669"/>
    <property type="project" value="UniProtKB-SubCell"/>
</dbReference>
<dbReference type="GO" id="GO:0032934">
    <property type="term" value="F:sterol binding"/>
    <property type="evidence" value="ECO:0007669"/>
    <property type="project" value="InterPro"/>
</dbReference>
<dbReference type="GO" id="GO:0032367">
    <property type="term" value="P:intracellular cholesterol transport"/>
    <property type="evidence" value="ECO:0007669"/>
    <property type="project" value="InterPro"/>
</dbReference>
<dbReference type="CDD" id="cd00916">
    <property type="entry name" value="Npc2_like"/>
    <property type="match status" value="1"/>
</dbReference>
<dbReference type="FunFam" id="2.60.40.770:FF:000001">
    <property type="entry name" value="NPC intracellular cholesterol transporter 2"/>
    <property type="match status" value="1"/>
</dbReference>
<dbReference type="Gene3D" id="2.60.40.770">
    <property type="match status" value="1"/>
</dbReference>
<dbReference type="InterPro" id="IPR014756">
    <property type="entry name" value="Ig_E-set"/>
</dbReference>
<dbReference type="InterPro" id="IPR003172">
    <property type="entry name" value="ML_dom"/>
</dbReference>
<dbReference type="InterPro" id="IPR033916">
    <property type="entry name" value="ML_Npc2-like"/>
</dbReference>
<dbReference type="InterPro" id="IPR039670">
    <property type="entry name" value="NPC2-like"/>
</dbReference>
<dbReference type="PANTHER" id="PTHR11306">
    <property type="entry name" value="NIEMANN PICK TYPE C2 PROTEIN NPC2-RELATED"/>
    <property type="match status" value="1"/>
</dbReference>
<dbReference type="PANTHER" id="PTHR11306:SF36">
    <property type="entry name" value="NIEMANN-PICK TYPE C-2C-RELATED"/>
    <property type="match status" value="1"/>
</dbReference>
<dbReference type="Pfam" id="PF02221">
    <property type="entry name" value="E1_DerP2_DerF2"/>
    <property type="match status" value="1"/>
</dbReference>
<dbReference type="SMART" id="SM00737">
    <property type="entry name" value="ML"/>
    <property type="match status" value="1"/>
</dbReference>
<dbReference type="SUPFAM" id="SSF81296">
    <property type="entry name" value="E set domains"/>
    <property type="match status" value="1"/>
</dbReference>
<organism>
    <name type="scientific">Manduca sexta</name>
    <name type="common">Tobacco hawkmoth</name>
    <name type="synonym">Tobacco hornworm</name>
    <dbReference type="NCBI Taxonomy" id="7130"/>
    <lineage>
        <taxon>Eukaryota</taxon>
        <taxon>Metazoa</taxon>
        <taxon>Ecdysozoa</taxon>
        <taxon>Arthropoda</taxon>
        <taxon>Hexapoda</taxon>
        <taxon>Insecta</taxon>
        <taxon>Pterygota</taxon>
        <taxon>Neoptera</taxon>
        <taxon>Endopterygota</taxon>
        <taxon>Lepidoptera</taxon>
        <taxon>Glossata</taxon>
        <taxon>Ditrysia</taxon>
        <taxon>Bombycoidea</taxon>
        <taxon>Sphingidae</taxon>
        <taxon>Sphinginae</taxon>
        <taxon>Sphingini</taxon>
        <taxon>Manduca</taxon>
    </lineage>
</organism>
<reference key="1">
    <citation type="thesis" date="1995" institute="University of Arizona" country="United States">
        <authorList>
            <person name="Meszaros M."/>
        </authorList>
    </citation>
    <scope>NUCLEOTIDE SEQUENCE [MRNA]</scope>
    <source>
        <strain>BH</strain>
    </source>
</reference>
<proteinExistence type="evidence at transcript level"/>
<keyword id="KW-1015">Disulfide bond</keyword>
<keyword id="KW-0325">Glycoprotein</keyword>
<keyword id="KW-0964">Secreted</keyword>
<keyword id="KW-0732">Signal</keyword>
<protein>
    <recommendedName>
        <fullName>Ecdysteroid-regulated 16 kDa protein</fullName>
    </recommendedName>
</protein>
<name>ES16_MANSE</name>
<accession>Q25481</accession>